<sequence length="430" mass="45658">MDRIRITGGNKLNGVIPISGAKNAALPLMIASLLTSDTLTLENVPHLADVEQLIRILGNHGVDISVNGRRESQGEAYSRTVHFTCRTIVDTTAPYELVSKMRASFWVIGPLLAREGRARVSLPGGCAIGTRPVDLFIEGLQALGATMEIDGGYINASAPKGGLIGAVYTFPKVSVGATHVMLMAASLARGTTVIHNAAREPEVVDLAHCLIAMGAKIEGAGTSTITIEGVTSLSGARHRVLPDRIETGTYAMAVAMAGGDVVLEGTRASLLDNALDTLRLAGVTISDTDTGLRVVRNGNGIQPVDIVTEPFPGFPTDLQAQFMALMTRSQGVSHITETIFENRFMHVQELARLGAKISLSGQMARIEGVTRLKGAPVMATDLRASVSLVIAGLVAEGETMVSRVYHLDRGFERLEEKLTRCGALVERVSD</sequence>
<keyword id="KW-0131">Cell cycle</keyword>
<keyword id="KW-0132">Cell division</keyword>
<keyword id="KW-0133">Cell shape</keyword>
<keyword id="KW-0961">Cell wall biogenesis/degradation</keyword>
<keyword id="KW-0963">Cytoplasm</keyword>
<keyword id="KW-0573">Peptidoglycan synthesis</keyword>
<keyword id="KW-0670">Pyruvate</keyword>
<keyword id="KW-1185">Reference proteome</keyword>
<keyword id="KW-0808">Transferase</keyword>
<gene>
    <name evidence="1" type="primary">murA</name>
    <name type="ordered locus">Atu0539</name>
    <name type="ORF">AGR_C_953</name>
</gene>
<protein>
    <recommendedName>
        <fullName evidence="1">UDP-N-acetylglucosamine 1-carboxyvinyltransferase</fullName>
        <ecNumber evidence="1">2.5.1.7</ecNumber>
    </recommendedName>
    <alternativeName>
        <fullName evidence="1">Enoylpyruvate transferase</fullName>
    </alternativeName>
    <alternativeName>
        <fullName evidence="1">UDP-N-acetylglucosamine enolpyruvyl transferase</fullName>
        <shortName evidence="1">EPT</shortName>
    </alternativeName>
</protein>
<comment type="function">
    <text evidence="1">Cell wall formation. Adds enolpyruvyl to UDP-N-acetylglucosamine.</text>
</comment>
<comment type="catalytic activity">
    <reaction evidence="1">
        <text>phosphoenolpyruvate + UDP-N-acetyl-alpha-D-glucosamine = UDP-N-acetyl-3-O-(1-carboxyvinyl)-alpha-D-glucosamine + phosphate</text>
        <dbReference type="Rhea" id="RHEA:18681"/>
        <dbReference type="ChEBI" id="CHEBI:43474"/>
        <dbReference type="ChEBI" id="CHEBI:57705"/>
        <dbReference type="ChEBI" id="CHEBI:58702"/>
        <dbReference type="ChEBI" id="CHEBI:68483"/>
        <dbReference type="EC" id="2.5.1.7"/>
    </reaction>
</comment>
<comment type="pathway">
    <text evidence="1">Cell wall biogenesis; peptidoglycan biosynthesis.</text>
</comment>
<comment type="subcellular location">
    <subcellularLocation>
        <location evidence="1">Cytoplasm</location>
    </subcellularLocation>
</comment>
<comment type="similarity">
    <text evidence="1">Belongs to the EPSP synthase family. MurA subfamily.</text>
</comment>
<name>MURA_AGRFC</name>
<organism>
    <name type="scientific">Agrobacterium fabrum (strain C58 / ATCC 33970)</name>
    <name type="common">Agrobacterium tumefaciens (strain C58)</name>
    <dbReference type="NCBI Taxonomy" id="176299"/>
    <lineage>
        <taxon>Bacteria</taxon>
        <taxon>Pseudomonadati</taxon>
        <taxon>Pseudomonadota</taxon>
        <taxon>Alphaproteobacteria</taxon>
        <taxon>Hyphomicrobiales</taxon>
        <taxon>Rhizobiaceae</taxon>
        <taxon>Rhizobium/Agrobacterium group</taxon>
        <taxon>Agrobacterium</taxon>
        <taxon>Agrobacterium tumefaciens complex</taxon>
    </lineage>
</organism>
<dbReference type="EC" id="2.5.1.7" evidence="1"/>
<dbReference type="EMBL" id="AE007869">
    <property type="protein sequence ID" value="AAK86353.1"/>
    <property type="molecule type" value="Genomic_DNA"/>
</dbReference>
<dbReference type="PIR" id="AG2642">
    <property type="entry name" value="AG2642"/>
</dbReference>
<dbReference type="PIR" id="H97424">
    <property type="entry name" value="H97424"/>
</dbReference>
<dbReference type="RefSeq" id="NP_353568.1">
    <property type="nucleotide sequence ID" value="NC_003062.2"/>
</dbReference>
<dbReference type="RefSeq" id="WP_010970968.1">
    <property type="nucleotide sequence ID" value="NC_003062.2"/>
</dbReference>
<dbReference type="SMR" id="Q8UHW9"/>
<dbReference type="STRING" id="176299.Atu0539"/>
<dbReference type="EnsemblBacteria" id="AAK86353">
    <property type="protein sequence ID" value="AAK86353"/>
    <property type="gene ID" value="Atu0539"/>
</dbReference>
<dbReference type="GeneID" id="1132577"/>
<dbReference type="KEGG" id="atu:Atu0539"/>
<dbReference type="PATRIC" id="fig|176299.10.peg.537"/>
<dbReference type="eggNOG" id="COG0766">
    <property type="taxonomic scope" value="Bacteria"/>
</dbReference>
<dbReference type="HOGENOM" id="CLU_027387_0_0_5"/>
<dbReference type="OrthoDB" id="9803760at2"/>
<dbReference type="PhylomeDB" id="Q8UHW9"/>
<dbReference type="BioCyc" id="AGRO:ATU0539-MONOMER"/>
<dbReference type="UniPathway" id="UPA00219"/>
<dbReference type="Proteomes" id="UP000000813">
    <property type="component" value="Chromosome circular"/>
</dbReference>
<dbReference type="GO" id="GO:0005737">
    <property type="term" value="C:cytoplasm"/>
    <property type="evidence" value="ECO:0007669"/>
    <property type="project" value="UniProtKB-SubCell"/>
</dbReference>
<dbReference type="GO" id="GO:0008760">
    <property type="term" value="F:UDP-N-acetylglucosamine 1-carboxyvinyltransferase activity"/>
    <property type="evidence" value="ECO:0007669"/>
    <property type="project" value="UniProtKB-UniRule"/>
</dbReference>
<dbReference type="GO" id="GO:0051301">
    <property type="term" value="P:cell division"/>
    <property type="evidence" value="ECO:0007669"/>
    <property type="project" value="UniProtKB-KW"/>
</dbReference>
<dbReference type="GO" id="GO:0071555">
    <property type="term" value="P:cell wall organization"/>
    <property type="evidence" value="ECO:0007669"/>
    <property type="project" value="UniProtKB-KW"/>
</dbReference>
<dbReference type="GO" id="GO:0009252">
    <property type="term" value="P:peptidoglycan biosynthetic process"/>
    <property type="evidence" value="ECO:0007669"/>
    <property type="project" value="UniProtKB-UniRule"/>
</dbReference>
<dbReference type="GO" id="GO:0008360">
    <property type="term" value="P:regulation of cell shape"/>
    <property type="evidence" value="ECO:0007669"/>
    <property type="project" value="UniProtKB-KW"/>
</dbReference>
<dbReference type="GO" id="GO:0019277">
    <property type="term" value="P:UDP-N-acetylgalactosamine biosynthetic process"/>
    <property type="evidence" value="ECO:0007669"/>
    <property type="project" value="InterPro"/>
</dbReference>
<dbReference type="CDD" id="cd01555">
    <property type="entry name" value="UdpNAET"/>
    <property type="match status" value="1"/>
</dbReference>
<dbReference type="FunFam" id="3.65.10.10:FF:000001">
    <property type="entry name" value="UDP-N-acetylglucosamine 1-carboxyvinyltransferase"/>
    <property type="match status" value="1"/>
</dbReference>
<dbReference type="Gene3D" id="3.65.10.10">
    <property type="entry name" value="Enolpyruvate transferase domain"/>
    <property type="match status" value="2"/>
</dbReference>
<dbReference type="HAMAP" id="MF_00111">
    <property type="entry name" value="MurA"/>
    <property type="match status" value="1"/>
</dbReference>
<dbReference type="InterPro" id="IPR001986">
    <property type="entry name" value="Enolpyruvate_Tfrase_dom"/>
</dbReference>
<dbReference type="InterPro" id="IPR036968">
    <property type="entry name" value="Enolpyruvate_Tfrase_sf"/>
</dbReference>
<dbReference type="InterPro" id="IPR050068">
    <property type="entry name" value="MurA_subfamily"/>
</dbReference>
<dbReference type="InterPro" id="IPR013792">
    <property type="entry name" value="RNA3'P_cycl/enolpyr_Trfase_a/b"/>
</dbReference>
<dbReference type="InterPro" id="IPR005750">
    <property type="entry name" value="UDP_GlcNAc_COvinyl_MurA"/>
</dbReference>
<dbReference type="NCBIfam" id="TIGR01072">
    <property type="entry name" value="murA"/>
    <property type="match status" value="1"/>
</dbReference>
<dbReference type="NCBIfam" id="NF006873">
    <property type="entry name" value="PRK09369.1"/>
    <property type="match status" value="1"/>
</dbReference>
<dbReference type="PANTHER" id="PTHR43783">
    <property type="entry name" value="UDP-N-ACETYLGLUCOSAMINE 1-CARBOXYVINYLTRANSFERASE"/>
    <property type="match status" value="1"/>
</dbReference>
<dbReference type="PANTHER" id="PTHR43783:SF1">
    <property type="entry name" value="UDP-N-ACETYLGLUCOSAMINE 1-CARBOXYVINYLTRANSFERASE"/>
    <property type="match status" value="1"/>
</dbReference>
<dbReference type="Pfam" id="PF00275">
    <property type="entry name" value="EPSP_synthase"/>
    <property type="match status" value="1"/>
</dbReference>
<dbReference type="SUPFAM" id="SSF55205">
    <property type="entry name" value="EPT/RTPC-like"/>
    <property type="match status" value="1"/>
</dbReference>
<accession>Q8UHW9</accession>
<evidence type="ECO:0000255" key="1">
    <source>
        <dbReference type="HAMAP-Rule" id="MF_00111"/>
    </source>
</evidence>
<feature type="chain" id="PRO_0000178843" description="UDP-N-acetylglucosamine 1-carboxyvinyltransferase">
    <location>
        <begin position="1"/>
        <end position="430"/>
    </location>
</feature>
<feature type="active site" description="Proton donor" evidence="1">
    <location>
        <position position="126"/>
    </location>
</feature>
<feature type="binding site" evidence="1">
    <location>
        <begin position="22"/>
        <end position="23"/>
    </location>
    <ligand>
        <name>phosphoenolpyruvate</name>
        <dbReference type="ChEBI" id="CHEBI:58702"/>
    </ligand>
</feature>
<feature type="binding site" evidence="1">
    <location>
        <position position="102"/>
    </location>
    <ligand>
        <name>UDP-N-acetyl-alpha-D-glucosamine</name>
        <dbReference type="ChEBI" id="CHEBI:57705"/>
    </ligand>
</feature>
<feature type="binding site" evidence="1">
    <location>
        <begin position="131"/>
        <end position="135"/>
    </location>
    <ligand>
        <name>UDP-N-acetyl-alpha-D-glucosamine</name>
        <dbReference type="ChEBI" id="CHEBI:57705"/>
    </ligand>
</feature>
<feature type="binding site" evidence="1">
    <location>
        <begin position="172"/>
        <end position="175"/>
    </location>
    <ligand>
        <name>UDP-N-acetyl-alpha-D-glucosamine</name>
        <dbReference type="ChEBI" id="CHEBI:57705"/>
    </ligand>
</feature>
<feature type="binding site" evidence="1">
    <location>
        <position position="317"/>
    </location>
    <ligand>
        <name>UDP-N-acetyl-alpha-D-glucosamine</name>
        <dbReference type="ChEBI" id="CHEBI:57705"/>
    </ligand>
</feature>
<feature type="binding site" evidence="1">
    <location>
        <position position="339"/>
    </location>
    <ligand>
        <name>UDP-N-acetyl-alpha-D-glucosamine</name>
        <dbReference type="ChEBI" id="CHEBI:57705"/>
    </ligand>
</feature>
<feature type="modified residue" description="2-(S-cysteinyl)pyruvic acid O-phosphothioketal" evidence="1">
    <location>
        <position position="126"/>
    </location>
</feature>
<proteinExistence type="inferred from homology"/>
<reference key="1">
    <citation type="journal article" date="2001" name="Science">
        <title>The genome of the natural genetic engineer Agrobacterium tumefaciens C58.</title>
        <authorList>
            <person name="Wood D.W."/>
            <person name="Setubal J.C."/>
            <person name="Kaul R."/>
            <person name="Monks D.E."/>
            <person name="Kitajima J.P."/>
            <person name="Okura V.K."/>
            <person name="Zhou Y."/>
            <person name="Chen L."/>
            <person name="Wood G.E."/>
            <person name="Almeida N.F. Jr."/>
            <person name="Woo L."/>
            <person name="Chen Y."/>
            <person name="Paulsen I.T."/>
            <person name="Eisen J.A."/>
            <person name="Karp P.D."/>
            <person name="Bovee D. Sr."/>
            <person name="Chapman P."/>
            <person name="Clendenning J."/>
            <person name="Deatherage G."/>
            <person name="Gillet W."/>
            <person name="Grant C."/>
            <person name="Kutyavin T."/>
            <person name="Levy R."/>
            <person name="Li M.-J."/>
            <person name="McClelland E."/>
            <person name="Palmieri A."/>
            <person name="Raymond C."/>
            <person name="Rouse G."/>
            <person name="Saenphimmachak C."/>
            <person name="Wu Z."/>
            <person name="Romero P."/>
            <person name="Gordon D."/>
            <person name="Zhang S."/>
            <person name="Yoo H."/>
            <person name="Tao Y."/>
            <person name="Biddle P."/>
            <person name="Jung M."/>
            <person name="Krespan W."/>
            <person name="Perry M."/>
            <person name="Gordon-Kamm B."/>
            <person name="Liao L."/>
            <person name="Kim S."/>
            <person name="Hendrick C."/>
            <person name="Zhao Z.-Y."/>
            <person name="Dolan M."/>
            <person name="Chumley F."/>
            <person name="Tingey S.V."/>
            <person name="Tomb J.-F."/>
            <person name="Gordon M.P."/>
            <person name="Olson M.V."/>
            <person name="Nester E.W."/>
        </authorList>
    </citation>
    <scope>NUCLEOTIDE SEQUENCE [LARGE SCALE GENOMIC DNA]</scope>
    <source>
        <strain>C58 / ATCC 33970</strain>
    </source>
</reference>
<reference key="2">
    <citation type="journal article" date="2001" name="Science">
        <title>Genome sequence of the plant pathogen and biotechnology agent Agrobacterium tumefaciens C58.</title>
        <authorList>
            <person name="Goodner B."/>
            <person name="Hinkle G."/>
            <person name="Gattung S."/>
            <person name="Miller N."/>
            <person name="Blanchard M."/>
            <person name="Qurollo B."/>
            <person name="Goldman B.S."/>
            <person name="Cao Y."/>
            <person name="Askenazi M."/>
            <person name="Halling C."/>
            <person name="Mullin L."/>
            <person name="Houmiel K."/>
            <person name="Gordon J."/>
            <person name="Vaudin M."/>
            <person name="Iartchouk O."/>
            <person name="Epp A."/>
            <person name="Liu F."/>
            <person name="Wollam C."/>
            <person name="Allinger M."/>
            <person name="Doughty D."/>
            <person name="Scott C."/>
            <person name="Lappas C."/>
            <person name="Markelz B."/>
            <person name="Flanagan C."/>
            <person name="Crowell C."/>
            <person name="Gurson J."/>
            <person name="Lomo C."/>
            <person name="Sear C."/>
            <person name="Strub G."/>
            <person name="Cielo C."/>
            <person name="Slater S."/>
        </authorList>
    </citation>
    <scope>NUCLEOTIDE SEQUENCE [LARGE SCALE GENOMIC DNA]</scope>
    <source>
        <strain>C58 / ATCC 33970</strain>
    </source>
</reference>